<comment type="function">
    <text evidence="1">One of the primary rRNA binding proteins, it binds directly to 16S rRNA where it nucleates assembly of the body of the 30S subunit.</text>
</comment>
<comment type="function">
    <text evidence="1">With S5 and S12 plays an important role in translational accuracy.</text>
</comment>
<comment type="subunit">
    <text evidence="1">Part of the 30S ribosomal subunit. Contacts protein S5. The interaction surface between S4 and S5 is involved in control of translational fidelity.</text>
</comment>
<comment type="similarity">
    <text evidence="1">Belongs to the universal ribosomal protein uS4 family.</text>
</comment>
<sequence length="204" mass="23737">MTTVINRKYRISRRLGINLWGRAKDPVNRRKYPPGQRGILGFKRLSDFGKQFAAHKKFKFYYAISSKQLRRIFLDAYNRKGYTADNFIGILESRLSSVLYHSGLVPTIYSAKQLISHKHVTVNDKIVNIPSYRVKPGDIVKIRERAAKIPVIVEAVQKQERKAPDYLEADSKEYSVKYLRIPQYSEVPYSADMEVNLVVEFYSR</sequence>
<organism>
    <name type="scientific">Wolbachia sp. subsp. Brugia malayi (strain TRS)</name>
    <dbReference type="NCBI Taxonomy" id="292805"/>
    <lineage>
        <taxon>Bacteria</taxon>
        <taxon>Pseudomonadati</taxon>
        <taxon>Pseudomonadota</taxon>
        <taxon>Alphaproteobacteria</taxon>
        <taxon>Rickettsiales</taxon>
        <taxon>Anaplasmataceae</taxon>
        <taxon>Wolbachieae</taxon>
        <taxon>Wolbachia</taxon>
    </lineage>
</organism>
<proteinExistence type="inferred from homology"/>
<keyword id="KW-1185">Reference proteome</keyword>
<keyword id="KW-0687">Ribonucleoprotein</keyword>
<keyword id="KW-0689">Ribosomal protein</keyword>
<keyword id="KW-0694">RNA-binding</keyword>
<keyword id="KW-0699">rRNA-binding</keyword>
<protein>
    <recommendedName>
        <fullName evidence="1">Small ribosomal subunit protein uS4</fullName>
    </recommendedName>
    <alternativeName>
        <fullName evidence="2">30S ribosomal protein S4</fullName>
    </alternativeName>
</protein>
<dbReference type="EMBL" id="AE017321">
    <property type="protein sequence ID" value="AAW71251.1"/>
    <property type="molecule type" value="Genomic_DNA"/>
</dbReference>
<dbReference type="RefSeq" id="WP_011256861.1">
    <property type="nucleotide sequence ID" value="NC_006833.1"/>
</dbReference>
<dbReference type="SMR" id="Q5GRX3"/>
<dbReference type="STRING" id="292805.Wbm0663"/>
<dbReference type="KEGG" id="wbm:Wbm0663"/>
<dbReference type="eggNOG" id="COG0522">
    <property type="taxonomic scope" value="Bacteria"/>
</dbReference>
<dbReference type="HOGENOM" id="CLU_092403_0_0_5"/>
<dbReference type="Proteomes" id="UP000000534">
    <property type="component" value="Chromosome"/>
</dbReference>
<dbReference type="GO" id="GO:0015935">
    <property type="term" value="C:small ribosomal subunit"/>
    <property type="evidence" value="ECO:0007669"/>
    <property type="project" value="InterPro"/>
</dbReference>
<dbReference type="GO" id="GO:0019843">
    <property type="term" value="F:rRNA binding"/>
    <property type="evidence" value="ECO:0007669"/>
    <property type="project" value="UniProtKB-UniRule"/>
</dbReference>
<dbReference type="GO" id="GO:0003735">
    <property type="term" value="F:structural constituent of ribosome"/>
    <property type="evidence" value="ECO:0007669"/>
    <property type="project" value="InterPro"/>
</dbReference>
<dbReference type="GO" id="GO:0042274">
    <property type="term" value="P:ribosomal small subunit biogenesis"/>
    <property type="evidence" value="ECO:0007669"/>
    <property type="project" value="TreeGrafter"/>
</dbReference>
<dbReference type="GO" id="GO:0006412">
    <property type="term" value="P:translation"/>
    <property type="evidence" value="ECO:0007669"/>
    <property type="project" value="UniProtKB-UniRule"/>
</dbReference>
<dbReference type="CDD" id="cd00165">
    <property type="entry name" value="S4"/>
    <property type="match status" value="1"/>
</dbReference>
<dbReference type="FunFam" id="3.10.290.10:FF:000001">
    <property type="entry name" value="30S ribosomal protein S4"/>
    <property type="match status" value="1"/>
</dbReference>
<dbReference type="Gene3D" id="1.10.1050.10">
    <property type="entry name" value="Ribosomal Protein S4 Delta 41, Chain A, domain 1"/>
    <property type="match status" value="1"/>
</dbReference>
<dbReference type="Gene3D" id="3.10.290.10">
    <property type="entry name" value="RNA-binding S4 domain"/>
    <property type="match status" value="1"/>
</dbReference>
<dbReference type="HAMAP" id="MF_01306_B">
    <property type="entry name" value="Ribosomal_uS4_B"/>
    <property type="match status" value="1"/>
</dbReference>
<dbReference type="InterPro" id="IPR022801">
    <property type="entry name" value="Ribosomal_uS4"/>
</dbReference>
<dbReference type="InterPro" id="IPR005709">
    <property type="entry name" value="Ribosomal_uS4_bac-type"/>
</dbReference>
<dbReference type="InterPro" id="IPR001912">
    <property type="entry name" value="Ribosomal_uS4_N"/>
</dbReference>
<dbReference type="InterPro" id="IPR002942">
    <property type="entry name" value="S4_RNA-bd"/>
</dbReference>
<dbReference type="InterPro" id="IPR036986">
    <property type="entry name" value="S4_RNA-bd_sf"/>
</dbReference>
<dbReference type="NCBIfam" id="NF003717">
    <property type="entry name" value="PRK05327.1"/>
    <property type="match status" value="1"/>
</dbReference>
<dbReference type="NCBIfam" id="TIGR01017">
    <property type="entry name" value="rpsD_bact"/>
    <property type="match status" value="1"/>
</dbReference>
<dbReference type="PANTHER" id="PTHR11831">
    <property type="entry name" value="30S 40S RIBOSOMAL PROTEIN"/>
    <property type="match status" value="1"/>
</dbReference>
<dbReference type="PANTHER" id="PTHR11831:SF4">
    <property type="entry name" value="SMALL RIBOSOMAL SUBUNIT PROTEIN US4M"/>
    <property type="match status" value="1"/>
</dbReference>
<dbReference type="Pfam" id="PF00163">
    <property type="entry name" value="Ribosomal_S4"/>
    <property type="match status" value="1"/>
</dbReference>
<dbReference type="Pfam" id="PF01479">
    <property type="entry name" value="S4"/>
    <property type="match status" value="1"/>
</dbReference>
<dbReference type="SMART" id="SM01390">
    <property type="entry name" value="Ribosomal_S4"/>
    <property type="match status" value="1"/>
</dbReference>
<dbReference type="SMART" id="SM00363">
    <property type="entry name" value="S4"/>
    <property type="match status" value="1"/>
</dbReference>
<dbReference type="SUPFAM" id="SSF55174">
    <property type="entry name" value="Alpha-L RNA-binding motif"/>
    <property type="match status" value="1"/>
</dbReference>
<dbReference type="PROSITE" id="PS50889">
    <property type="entry name" value="S4"/>
    <property type="match status" value="1"/>
</dbReference>
<accession>Q5GRX3</accession>
<evidence type="ECO:0000255" key="1">
    <source>
        <dbReference type="HAMAP-Rule" id="MF_01306"/>
    </source>
</evidence>
<evidence type="ECO:0000305" key="2"/>
<feature type="chain" id="PRO_0000293396" description="Small ribosomal subunit protein uS4">
    <location>
        <begin position="1"/>
        <end position="204"/>
    </location>
</feature>
<feature type="domain" description="S4 RNA-binding" evidence="1">
    <location>
        <begin position="93"/>
        <end position="156"/>
    </location>
</feature>
<name>RS4_WOLTR</name>
<gene>
    <name evidence="1" type="primary">rpsD</name>
    <name type="ordered locus">Wbm0663</name>
</gene>
<reference key="1">
    <citation type="journal article" date="2005" name="PLoS Biol.">
        <title>The Wolbachia genome of Brugia malayi: endosymbiont evolution within a human pathogenic nematode.</title>
        <authorList>
            <person name="Foster J."/>
            <person name="Ganatra M."/>
            <person name="Kamal I."/>
            <person name="Ware J."/>
            <person name="Makarova K."/>
            <person name="Ivanova N."/>
            <person name="Bhattacharyya A."/>
            <person name="Kapatral V."/>
            <person name="Kumar S."/>
            <person name="Posfai J."/>
            <person name="Vincze T."/>
            <person name="Ingram J."/>
            <person name="Moran L."/>
            <person name="Lapidus A."/>
            <person name="Omelchenko M."/>
            <person name="Kyrpides N."/>
            <person name="Ghedin E."/>
            <person name="Wang S."/>
            <person name="Goltsman E."/>
            <person name="Joukov V."/>
            <person name="Ostrovskaya O."/>
            <person name="Tsukerman K."/>
            <person name="Mazur M."/>
            <person name="Comb D."/>
            <person name="Koonin E."/>
            <person name="Slatko B."/>
        </authorList>
    </citation>
    <scope>NUCLEOTIDE SEQUENCE [LARGE SCALE GENOMIC DNA]</scope>
    <source>
        <strain>TRS</strain>
    </source>
</reference>